<comment type="subcellular location">
    <subcellularLocation>
        <location evidence="2">Cell membrane</location>
        <topology evidence="2">Multi-pass membrane protein</topology>
    </subcellularLocation>
</comment>
<gene>
    <name type="ordered locus">MJ0323</name>
</gene>
<sequence>MFLALTSIAIPAAIVIPISLIANLPNCGISLTFSMTIGFVGLILTIAASPVFKNCGFSSMTCPVLGSNFFNNSMNVHATCAVCAWKTGV</sequence>
<reference key="1">
    <citation type="journal article" date="1996" name="Science">
        <title>Complete genome sequence of the methanogenic archaeon, Methanococcus jannaschii.</title>
        <authorList>
            <person name="Bult C.J."/>
            <person name="White O."/>
            <person name="Olsen G.J."/>
            <person name="Zhou L."/>
            <person name="Fleischmann R.D."/>
            <person name="Sutton G.G."/>
            <person name="Blake J.A."/>
            <person name="FitzGerald L.M."/>
            <person name="Clayton R.A."/>
            <person name="Gocayne J.D."/>
            <person name="Kerlavage A.R."/>
            <person name="Dougherty B.A."/>
            <person name="Tomb J.-F."/>
            <person name="Adams M.D."/>
            <person name="Reich C.I."/>
            <person name="Overbeek R."/>
            <person name="Kirkness E.F."/>
            <person name="Weinstock K.G."/>
            <person name="Merrick J.M."/>
            <person name="Glodek A."/>
            <person name="Scott J.L."/>
            <person name="Geoghagen N.S.M."/>
            <person name="Weidman J.F."/>
            <person name="Fuhrmann J.L."/>
            <person name="Nguyen D."/>
            <person name="Utterback T.R."/>
            <person name="Kelley J.M."/>
            <person name="Peterson J.D."/>
            <person name="Sadow P.W."/>
            <person name="Hanna M.C."/>
            <person name="Cotton M.D."/>
            <person name="Roberts K.M."/>
            <person name="Hurst M.A."/>
            <person name="Kaine B.P."/>
            <person name="Borodovsky M."/>
            <person name="Klenk H.-P."/>
            <person name="Fraser C.M."/>
            <person name="Smith H.O."/>
            <person name="Woese C.R."/>
            <person name="Venter J.C."/>
        </authorList>
    </citation>
    <scope>NUCLEOTIDE SEQUENCE [LARGE SCALE GENOMIC DNA]</scope>
    <source>
        <strain>ATCC 43067 / DSM 2661 / JAL-1 / JCM 10045 / NBRC 100440</strain>
    </source>
</reference>
<name>Y323_METJA</name>
<organism>
    <name type="scientific">Methanocaldococcus jannaschii (strain ATCC 43067 / DSM 2661 / JAL-1 / JCM 10045 / NBRC 100440)</name>
    <name type="common">Methanococcus jannaschii</name>
    <dbReference type="NCBI Taxonomy" id="243232"/>
    <lineage>
        <taxon>Archaea</taxon>
        <taxon>Methanobacteriati</taxon>
        <taxon>Methanobacteriota</taxon>
        <taxon>Methanomada group</taxon>
        <taxon>Methanococci</taxon>
        <taxon>Methanococcales</taxon>
        <taxon>Methanocaldococcaceae</taxon>
        <taxon>Methanocaldococcus</taxon>
    </lineage>
</organism>
<keyword id="KW-1003">Cell membrane</keyword>
<keyword id="KW-0472">Membrane</keyword>
<keyword id="KW-1185">Reference proteome</keyword>
<keyword id="KW-0812">Transmembrane</keyword>
<keyword id="KW-1133">Transmembrane helix</keyword>
<dbReference type="EMBL" id="L77117">
    <property type="protein sequence ID" value="AAB98307.1"/>
    <property type="molecule type" value="Genomic_DNA"/>
</dbReference>
<dbReference type="PaxDb" id="243232-MJ_0323"/>
<dbReference type="EnsemblBacteria" id="AAB98307">
    <property type="protein sequence ID" value="AAB98307"/>
    <property type="gene ID" value="MJ_0323"/>
</dbReference>
<dbReference type="KEGG" id="mja:MJ_0323"/>
<dbReference type="HOGENOM" id="CLU_2447690_0_0_2"/>
<dbReference type="InParanoid" id="P81301"/>
<dbReference type="Proteomes" id="UP000000805">
    <property type="component" value="Chromosome"/>
</dbReference>
<dbReference type="GO" id="GO:0005886">
    <property type="term" value="C:plasma membrane"/>
    <property type="evidence" value="ECO:0007669"/>
    <property type="project" value="UniProtKB-SubCell"/>
</dbReference>
<proteinExistence type="predicted"/>
<evidence type="ECO:0000255" key="1"/>
<evidence type="ECO:0000305" key="2"/>
<feature type="chain" id="PRO_0000106793" description="Uncharacterized protein MJ0323">
    <location>
        <begin position="1"/>
        <end position="89"/>
    </location>
</feature>
<feature type="transmembrane region" description="Helical" evidence="1">
    <location>
        <begin position="1"/>
        <end position="21"/>
    </location>
</feature>
<feature type="transmembrane region" description="Helical" evidence="1">
    <location>
        <begin position="28"/>
        <end position="48"/>
    </location>
</feature>
<accession>P81301</accession>
<protein>
    <recommendedName>
        <fullName>Uncharacterized protein MJ0323</fullName>
    </recommendedName>
</protein>